<sequence length="176" mass="18985">MTTIVSVRRNGHVVIAGDGQATLGNTVMKGNVKKVRRLYNDKVIAGFAGGTADAFTLFELFERKLEMHQGHLVKAAVELAKDWRTDRMLRKLEALLAVADETASLIITGNGDVVQPENDLIAIGSGGPYAQAAARALLENTELGAREIAEKALDIAGDICIYTNHFHTIEELTAKA</sequence>
<keyword id="KW-0021">Allosteric enzyme</keyword>
<keyword id="KW-0963">Cytoplasm</keyword>
<keyword id="KW-0378">Hydrolase</keyword>
<keyword id="KW-0479">Metal-binding</keyword>
<keyword id="KW-0645">Protease</keyword>
<keyword id="KW-0915">Sodium</keyword>
<keyword id="KW-0346">Stress response</keyword>
<keyword id="KW-0888">Threonine protease</keyword>
<name>HSLV_SALA4</name>
<feature type="chain" id="PRO_1000100908" description="ATP-dependent protease subunit HslV">
    <location>
        <begin position="1"/>
        <end position="176"/>
    </location>
</feature>
<feature type="active site" evidence="1">
    <location>
        <position position="2"/>
    </location>
</feature>
<feature type="binding site" evidence="1">
    <location>
        <position position="157"/>
    </location>
    <ligand>
        <name>Na(+)</name>
        <dbReference type="ChEBI" id="CHEBI:29101"/>
    </ligand>
</feature>
<feature type="binding site" evidence="1">
    <location>
        <position position="160"/>
    </location>
    <ligand>
        <name>Na(+)</name>
        <dbReference type="ChEBI" id="CHEBI:29101"/>
    </ligand>
</feature>
<feature type="binding site" evidence="1">
    <location>
        <position position="163"/>
    </location>
    <ligand>
        <name>Na(+)</name>
        <dbReference type="ChEBI" id="CHEBI:29101"/>
    </ligand>
</feature>
<dbReference type="EC" id="3.4.25.2" evidence="1"/>
<dbReference type="EMBL" id="CP001138">
    <property type="protein sequence ID" value="ACH49181.1"/>
    <property type="molecule type" value="Genomic_DNA"/>
</dbReference>
<dbReference type="RefSeq" id="WP_000208240.1">
    <property type="nucleotide sequence ID" value="NC_011149.1"/>
</dbReference>
<dbReference type="SMR" id="B5F0S3"/>
<dbReference type="MEROPS" id="T01.006"/>
<dbReference type="KEGG" id="sea:SeAg_B4338"/>
<dbReference type="HOGENOM" id="CLU_093872_1_0_6"/>
<dbReference type="Proteomes" id="UP000008819">
    <property type="component" value="Chromosome"/>
</dbReference>
<dbReference type="GO" id="GO:0009376">
    <property type="term" value="C:HslUV protease complex"/>
    <property type="evidence" value="ECO:0007669"/>
    <property type="project" value="UniProtKB-UniRule"/>
</dbReference>
<dbReference type="GO" id="GO:0005839">
    <property type="term" value="C:proteasome core complex"/>
    <property type="evidence" value="ECO:0007669"/>
    <property type="project" value="InterPro"/>
</dbReference>
<dbReference type="GO" id="GO:0046872">
    <property type="term" value="F:metal ion binding"/>
    <property type="evidence" value="ECO:0007669"/>
    <property type="project" value="UniProtKB-KW"/>
</dbReference>
<dbReference type="GO" id="GO:0004298">
    <property type="term" value="F:threonine-type endopeptidase activity"/>
    <property type="evidence" value="ECO:0007669"/>
    <property type="project" value="UniProtKB-KW"/>
</dbReference>
<dbReference type="GO" id="GO:0051603">
    <property type="term" value="P:proteolysis involved in protein catabolic process"/>
    <property type="evidence" value="ECO:0007669"/>
    <property type="project" value="InterPro"/>
</dbReference>
<dbReference type="CDD" id="cd01913">
    <property type="entry name" value="protease_HslV"/>
    <property type="match status" value="1"/>
</dbReference>
<dbReference type="FunFam" id="3.60.20.10:FF:000002">
    <property type="entry name" value="ATP-dependent protease subunit HslV"/>
    <property type="match status" value="1"/>
</dbReference>
<dbReference type="Gene3D" id="3.60.20.10">
    <property type="entry name" value="Glutamine Phosphoribosylpyrophosphate, subunit 1, domain 1"/>
    <property type="match status" value="1"/>
</dbReference>
<dbReference type="HAMAP" id="MF_00248">
    <property type="entry name" value="HslV"/>
    <property type="match status" value="1"/>
</dbReference>
<dbReference type="InterPro" id="IPR022281">
    <property type="entry name" value="ATP-dep_Prtase_HsIV_su"/>
</dbReference>
<dbReference type="InterPro" id="IPR029055">
    <property type="entry name" value="Ntn_hydrolases_N"/>
</dbReference>
<dbReference type="InterPro" id="IPR001353">
    <property type="entry name" value="Proteasome_sua/b"/>
</dbReference>
<dbReference type="InterPro" id="IPR023333">
    <property type="entry name" value="Proteasome_suB-type"/>
</dbReference>
<dbReference type="NCBIfam" id="TIGR03692">
    <property type="entry name" value="ATP_dep_HslV"/>
    <property type="match status" value="1"/>
</dbReference>
<dbReference type="NCBIfam" id="NF003964">
    <property type="entry name" value="PRK05456.1"/>
    <property type="match status" value="1"/>
</dbReference>
<dbReference type="PANTHER" id="PTHR32194:SF0">
    <property type="entry name" value="ATP-DEPENDENT PROTEASE SUBUNIT HSLV"/>
    <property type="match status" value="1"/>
</dbReference>
<dbReference type="PANTHER" id="PTHR32194">
    <property type="entry name" value="METALLOPROTEASE TLDD"/>
    <property type="match status" value="1"/>
</dbReference>
<dbReference type="Pfam" id="PF00227">
    <property type="entry name" value="Proteasome"/>
    <property type="match status" value="1"/>
</dbReference>
<dbReference type="PIRSF" id="PIRSF039093">
    <property type="entry name" value="HslV"/>
    <property type="match status" value="1"/>
</dbReference>
<dbReference type="SUPFAM" id="SSF56235">
    <property type="entry name" value="N-terminal nucleophile aminohydrolases (Ntn hydrolases)"/>
    <property type="match status" value="1"/>
</dbReference>
<dbReference type="PROSITE" id="PS51476">
    <property type="entry name" value="PROTEASOME_BETA_2"/>
    <property type="match status" value="1"/>
</dbReference>
<protein>
    <recommendedName>
        <fullName evidence="1">ATP-dependent protease subunit HslV</fullName>
        <ecNumber evidence="1">3.4.25.2</ecNumber>
    </recommendedName>
    <alternativeName>
        <fullName evidence="1">Heat shock protein HslV</fullName>
    </alternativeName>
</protein>
<organism>
    <name type="scientific">Salmonella agona (strain SL483)</name>
    <dbReference type="NCBI Taxonomy" id="454166"/>
    <lineage>
        <taxon>Bacteria</taxon>
        <taxon>Pseudomonadati</taxon>
        <taxon>Pseudomonadota</taxon>
        <taxon>Gammaproteobacteria</taxon>
        <taxon>Enterobacterales</taxon>
        <taxon>Enterobacteriaceae</taxon>
        <taxon>Salmonella</taxon>
    </lineage>
</organism>
<gene>
    <name evidence="1" type="primary">hslV</name>
    <name type="ordered locus">SeAg_B4338</name>
</gene>
<comment type="function">
    <text evidence="1">Protease subunit of a proteasome-like degradation complex believed to be a general protein degrading machinery.</text>
</comment>
<comment type="catalytic activity">
    <reaction evidence="1">
        <text>ATP-dependent cleavage of peptide bonds with broad specificity.</text>
        <dbReference type="EC" id="3.4.25.2"/>
    </reaction>
</comment>
<comment type="activity regulation">
    <text evidence="1">Allosterically activated by HslU binding.</text>
</comment>
<comment type="subunit">
    <text evidence="1">A double ring-shaped homohexamer of HslV is capped on each side by a ring-shaped HslU homohexamer. The assembly of the HslU/HslV complex is dependent on binding of ATP.</text>
</comment>
<comment type="subcellular location">
    <subcellularLocation>
        <location evidence="1">Cytoplasm</location>
    </subcellularLocation>
</comment>
<comment type="induction">
    <text evidence="1">By heat shock.</text>
</comment>
<comment type="similarity">
    <text evidence="1">Belongs to the peptidase T1B family. HslV subfamily.</text>
</comment>
<proteinExistence type="inferred from homology"/>
<accession>B5F0S3</accession>
<evidence type="ECO:0000255" key="1">
    <source>
        <dbReference type="HAMAP-Rule" id="MF_00248"/>
    </source>
</evidence>
<reference key="1">
    <citation type="journal article" date="2011" name="J. Bacteriol.">
        <title>Comparative genomics of 28 Salmonella enterica isolates: evidence for CRISPR-mediated adaptive sublineage evolution.</title>
        <authorList>
            <person name="Fricke W.F."/>
            <person name="Mammel M.K."/>
            <person name="McDermott P.F."/>
            <person name="Tartera C."/>
            <person name="White D.G."/>
            <person name="Leclerc J.E."/>
            <person name="Ravel J."/>
            <person name="Cebula T.A."/>
        </authorList>
    </citation>
    <scope>NUCLEOTIDE SEQUENCE [LARGE SCALE GENOMIC DNA]</scope>
    <source>
        <strain>SL483</strain>
    </source>
</reference>